<gene>
    <name type="primary">trmD</name>
    <name type="ordered locus">TC_0296</name>
</gene>
<organism>
    <name type="scientific">Chlamydia muridarum (strain MoPn / Nigg)</name>
    <dbReference type="NCBI Taxonomy" id="243161"/>
    <lineage>
        <taxon>Bacteria</taxon>
        <taxon>Pseudomonadati</taxon>
        <taxon>Chlamydiota</taxon>
        <taxon>Chlamydiia</taxon>
        <taxon>Chlamydiales</taxon>
        <taxon>Chlamydiaceae</taxon>
        <taxon>Chlamydia/Chlamydophila group</taxon>
        <taxon>Chlamydia</taxon>
    </lineage>
</organism>
<dbReference type="EC" id="2.1.1.228"/>
<dbReference type="EMBL" id="AE002160">
    <property type="protein sequence ID" value="AAF39162.1"/>
    <property type="molecule type" value="Genomic_DNA"/>
</dbReference>
<dbReference type="PIR" id="D81718">
    <property type="entry name" value="D81718"/>
</dbReference>
<dbReference type="RefSeq" id="WP_010230072.1">
    <property type="nucleotide sequence ID" value="NZ_CP063055.1"/>
</dbReference>
<dbReference type="SMR" id="Q9PL12"/>
<dbReference type="GeneID" id="1246466"/>
<dbReference type="KEGG" id="cmu:TC_0296"/>
<dbReference type="eggNOG" id="COG0336">
    <property type="taxonomic scope" value="Bacteria"/>
</dbReference>
<dbReference type="eggNOG" id="COG0346">
    <property type="taxonomic scope" value="Bacteria"/>
</dbReference>
<dbReference type="HOGENOM" id="CLU_047363_0_2_0"/>
<dbReference type="OrthoDB" id="9807416at2"/>
<dbReference type="Proteomes" id="UP000000800">
    <property type="component" value="Chromosome"/>
</dbReference>
<dbReference type="GO" id="GO:0005829">
    <property type="term" value="C:cytosol"/>
    <property type="evidence" value="ECO:0007669"/>
    <property type="project" value="TreeGrafter"/>
</dbReference>
<dbReference type="GO" id="GO:0052906">
    <property type="term" value="F:tRNA (guanine(37)-N1)-methyltransferase activity"/>
    <property type="evidence" value="ECO:0007669"/>
    <property type="project" value="UniProtKB-UniRule"/>
</dbReference>
<dbReference type="GO" id="GO:0002939">
    <property type="term" value="P:tRNA N1-guanine methylation"/>
    <property type="evidence" value="ECO:0007669"/>
    <property type="project" value="TreeGrafter"/>
</dbReference>
<dbReference type="CDD" id="cd18080">
    <property type="entry name" value="TrmD-like"/>
    <property type="match status" value="1"/>
</dbReference>
<dbReference type="CDD" id="cd06587">
    <property type="entry name" value="VOC"/>
    <property type="match status" value="1"/>
</dbReference>
<dbReference type="FunFam" id="1.10.1270.20:FF:000004">
    <property type="entry name" value="tRNA (guanine-N(1)-)-methyltransferase"/>
    <property type="match status" value="1"/>
</dbReference>
<dbReference type="FunFam" id="3.40.1280.10:FF:000001">
    <property type="entry name" value="tRNA (guanine-N(1)-)-methyltransferase"/>
    <property type="match status" value="1"/>
</dbReference>
<dbReference type="Gene3D" id="3.40.1280.10">
    <property type="match status" value="1"/>
</dbReference>
<dbReference type="Gene3D" id="1.10.1270.20">
    <property type="entry name" value="tRNA(m1g37)methyltransferase, domain 2"/>
    <property type="match status" value="1"/>
</dbReference>
<dbReference type="HAMAP" id="MF_00605">
    <property type="entry name" value="TrmD"/>
    <property type="match status" value="1"/>
</dbReference>
<dbReference type="InterPro" id="IPR029028">
    <property type="entry name" value="Alpha/beta_knot_MTases"/>
</dbReference>
<dbReference type="InterPro" id="IPR029068">
    <property type="entry name" value="Glyas_Bleomycin-R_OHBP_Dase"/>
</dbReference>
<dbReference type="InterPro" id="IPR023148">
    <property type="entry name" value="tRNA_m1G_MeTrfase_C_sf"/>
</dbReference>
<dbReference type="InterPro" id="IPR002649">
    <property type="entry name" value="tRNA_m1G_MeTrfase_TrmD"/>
</dbReference>
<dbReference type="InterPro" id="IPR029026">
    <property type="entry name" value="tRNA_m1G_MTases_N"/>
</dbReference>
<dbReference type="InterPro" id="IPR016009">
    <property type="entry name" value="tRNA_MeTrfase_TRMD/TRM10"/>
</dbReference>
<dbReference type="NCBIfam" id="NF000648">
    <property type="entry name" value="PRK00026.1"/>
    <property type="match status" value="1"/>
</dbReference>
<dbReference type="NCBIfam" id="TIGR00088">
    <property type="entry name" value="trmD"/>
    <property type="match status" value="1"/>
</dbReference>
<dbReference type="PANTHER" id="PTHR46417">
    <property type="entry name" value="TRNA (GUANINE-N(1)-)-METHYLTRANSFERASE"/>
    <property type="match status" value="1"/>
</dbReference>
<dbReference type="PANTHER" id="PTHR46417:SF1">
    <property type="entry name" value="TRNA (GUANINE-N(1)-)-METHYLTRANSFERASE"/>
    <property type="match status" value="1"/>
</dbReference>
<dbReference type="Pfam" id="PF01746">
    <property type="entry name" value="tRNA_m1G_MT"/>
    <property type="match status" value="1"/>
</dbReference>
<dbReference type="SUPFAM" id="SSF75217">
    <property type="entry name" value="alpha/beta knot"/>
    <property type="match status" value="1"/>
</dbReference>
<dbReference type="SUPFAM" id="SSF54593">
    <property type="entry name" value="Glyoxalase/Bleomycin resistance protein/Dihydroxybiphenyl dioxygenase"/>
    <property type="match status" value="1"/>
</dbReference>
<comment type="function">
    <text evidence="1">Specifically methylates guanosine-37 in various tRNAs.</text>
</comment>
<comment type="catalytic activity">
    <reaction>
        <text>guanosine(37) in tRNA + S-adenosyl-L-methionine = N(1)-methylguanosine(37) in tRNA + S-adenosyl-L-homocysteine + H(+)</text>
        <dbReference type="Rhea" id="RHEA:36899"/>
        <dbReference type="Rhea" id="RHEA-COMP:10145"/>
        <dbReference type="Rhea" id="RHEA-COMP:10147"/>
        <dbReference type="ChEBI" id="CHEBI:15378"/>
        <dbReference type="ChEBI" id="CHEBI:57856"/>
        <dbReference type="ChEBI" id="CHEBI:59789"/>
        <dbReference type="ChEBI" id="CHEBI:73542"/>
        <dbReference type="ChEBI" id="CHEBI:74269"/>
        <dbReference type="EC" id="2.1.1.228"/>
    </reaction>
</comment>
<comment type="subunit">
    <text evidence="1">Homodimer.</text>
</comment>
<comment type="subcellular location">
    <subcellularLocation>
        <location evidence="2">Cytoplasm</location>
    </subcellularLocation>
</comment>
<comment type="similarity">
    <text evidence="2">Belongs to the RNA methyltransferase TrmD family.</text>
</comment>
<sequence>MEIDILSLFPDYFTSPLQATILGRAIKQGALSIRSRDIREFGLGKWKQVDDAPYSGEGMLLMAEPVVQAIRSVKREKSKVVYLSPQGQLLSAKKSRELSLCPHLILLCGHYEGIDERALASEVDEEISIGDYVLTNGCAAALVLVDALARFIPGVLGNQESAECDSLENGLLEGPHYTRPRVFEGVQVPEILFCGDHQRIANWRKKVSLERTRERRPDLYLQYFYGDRAFWGAQEDPLKMRETSPQAFSVVLEVKDLRKAKKFYSRMFGKEHWDGDKLLLGEKTSLYLQQTNERRGATKVFVELETEDGFVRFLRRWEMLGGQLGEVGMGNLPLRQVFDLDGHIWVVSCVQK</sequence>
<feature type="chain" id="PRO_0000060353" description="tRNA (guanine-N(1)-)-methyltransferase">
    <location>
        <begin position="1"/>
        <end position="352"/>
    </location>
</feature>
<feature type="binding site" evidence="1">
    <location>
        <position position="109"/>
    </location>
    <ligand>
        <name>S-adenosyl-L-methionine</name>
        <dbReference type="ChEBI" id="CHEBI:59789"/>
    </ligand>
</feature>
<feature type="binding site" evidence="1">
    <location>
        <begin position="129"/>
        <end position="134"/>
    </location>
    <ligand>
        <name>S-adenosyl-L-methionine</name>
        <dbReference type="ChEBI" id="CHEBI:59789"/>
    </ligand>
</feature>
<accession>Q9PL12</accession>
<protein>
    <recommendedName>
        <fullName>tRNA (guanine-N(1)-)-methyltransferase</fullName>
        <ecNumber>2.1.1.228</ecNumber>
    </recommendedName>
    <alternativeName>
        <fullName>M1G-methyltransferase</fullName>
    </alternativeName>
    <alternativeName>
        <fullName>tRNA [GM37] methyltransferase</fullName>
    </alternativeName>
</protein>
<name>TRMD_CHLMU</name>
<keyword id="KW-0963">Cytoplasm</keyword>
<keyword id="KW-0489">Methyltransferase</keyword>
<keyword id="KW-0949">S-adenosyl-L-methionine</keyword>
<keyword id="KW-0808">Transferase</keyword>
<keyword id="KW-0819">tRNA processing</keyword>
<proteinExistence type="inferred from homology"/>
<evidence type="ECO:0000250" key="1"/>
<evidence type="ECO:0000305" key="2"/>
<reference key="1">
    <citation type="journal article" date="2000" name="Nucleic Acids Res.">
        <title>Genome sequences of Chlamydia trachomatis MoPn and Chlamydia pneumoniae AR39.</title>
        <authorList>
            <person name="Read T.D."/>
            <person name="Brunham R.C."/>
            <person name="Shen C."/>
            <person name="Gill S.R."/>
            <person name="Heidelberg J.F."/>
            <person name="White O."/>
            <person name="Hickey E.K."/>
            <person name="Peterson J.D."/>
            <person name="Utterback T.R."/>
            <person name="Berry K.J."/>
            <person name="Bass S."/>
            <person name="Linher K.D."/>
            <person name="Weidman J.F."/>
            <person name="Khouri H.M."/>
            <person name="Craven B."/>
            <person name="Bowman C."/>
            <person name="Dodson R.J."/>
            <person name="Gwinn M.L."/>
            <person name="Nelson W.C."/>
            <person name="DeBoy R.T."/>
            <person name="Kolonay J.F."/>
            <person name="McClarty G."/>
            <person name="Salzberg S.L."/>
            <person name="Eisen J.A."/>
            <person name="Fraser C.M."/>
        </authorList>
    </citation>
    <scope>NUCLEOTIDE SEQUENCE [LARGE SCALE GENOMIC DNA]</scope>
    <source>
        <strain>MoPn / Nigg</strain>
    </source>
</reference>